<organism>
    <name type="scientific">Halalkalibacterium halodurans (strain ATCC BAA-125 / DSM 18197 / FERM 7344 / JCM 9153 / C-125)</name>
    <name type="common">Bacillus halodurans</name>
    <dbReference type="NCBI Taxonomy" id="272558"/>
    <lineage>
        <taxon>Bacteria</taxon>
        <taxon>Bacillati</taxon>
        <taxon>Bacillota</taxon>
        <taxon>Bacilli</taxon>
        <taxon>Bacillales</taxon>
        <taxon>Bacillaceae</taxon>
        <taxon>Halalkalibacterium (ex Joshi et al. 2022)</taxon>
    </lineage>
</organism>
<keyword id="KW-1003">Cell membrane</keyword>
<keyword id="KW-0169">Cobalamin biosynthesis</keyword>
<keyword id="KW-0460">Magnesium</keyword>
<keyword id="KW-0472">Membrane</keyword>
<keyword id="KW-1185">Reference proteome</keyword>
<keyword id="KW-0808">Transferase</keyword>
<keyword id="KW-0812">Transmembrane</keyword>
<keyword id="KW-1133">Transmembrane helix</keyword>
<evidence type="ECO:0000255" key="1">
    <source>
        <dbReference type="HAMAP-Rule" id="MF_00719"/>
    </source>
</evidence>
<comment type="function">
    <text evidence="1">Joins adenosylcobinamide-GDP and alpha-ribazole to generate adenosylcobalamin (Ado-cobalamin). Also synthesizes adenosylcobalamin 5'-phosphate from adenosylcobinamide-GDP and alpha-ribazole 5'-phosphate.</text>
</comment>
<comment type="catalytic activity">
    <reaction evidence="1">
        <text>alpha-ribazole + adenosylcob(III)inamide-GDP = adenosylcob(III)alamin + GMP + H(+)</text>
        <dbReference type="Rhea" id="RHEA:16049"/>
        <dbReference type="ChEBI" id="CHEBI:10329"/>
        <dbReference type="ChEBI" id="CHEBI:15378"/>
        <dbReference type="ChEBI" id="CHEBI:18408"/>
        <dbReference type="ChEBI" id="CHEBI:58115"/>
        <dbReference type="ChEBI" id="CHEBI:60487"/>
        <dbReference type="EC" id="2.7.8.26"/>
    </reaction>
</comment>
<comment type="catalytic activity">
    <reaction evidence="1">
        <text>alpha-ribazole 5'-phosphate + adenosylcob(III)inamide-GDP = adenosylcob(III)alamin 5'-phosphate + GMP + H(+)</text>
        <dbReference type="Rhea" id="RHEA:23560"/>
        <dbReference type="ChEBI" id="CHEBI:15378"/>
        <dbReference type="ChEBI" id="CHEBI:57918"/>
        <dbReference type="ChEBI" id="CHEBI:58115"/>
        <dbReference type="ChEBI" id="CHEBI:60487"/>
        <dbReference type="ChEBI" id="CHEBI:60493"/>
        <dbReference type="EC" id="2.7.8.26"/>
    </reaction>
</comment>
<comment type="cofactor">
    <cofactor evidence="1">
        <name>Mg(2+)</name>
        <dbReference type="ChEBI" id="CHEBI:18420"/>
    </cofactor>
</comment>
<comment type="pathway">
    <text evidence="1">Cofactor biosynthesis; adenosylcobalamin biosynthesis; adenosylcobalamin from cob(II)yrinate a,c-diamide: step 7/7.</text>
</comment>
<comment type="subcellular location">
    <subcellularLocation>
        <location evidence="1">Cell membrane</location>
        <topology evidence="1">Multi-pass membrane protein</topology>
    </subcellularLocation>
</comment>
<comment type="similarity">
    <text evidence="1">Belongs to the CobS family.</text>
</comment>
<proteinExistence type="inferred from homology"/>
<feature type="chain" id="PRO_0000146865" description="Adenosylcobinamide-GDP ribazoletransferase">
    <location>
        <begin position="1"/>
        <end position="261"/>
    </location>
</feature>
<feature type="transmembrane region" description="Helical" evidence="1">
    <location>
        <begin position="4"/>
        <end position="26"/>
    </location>
</feature>
<feature type="transmembrane region" description="Helical" evidence="1">
    <location>
        <begin position="40"/>
        <end position="60"/>
    </location>
</feature>
<feature type="transmembrane region" description="Helical" evidence="1">
    <location>
        <begin position="62"/>
        <end position="82"/>
    </location>
</feature>
<feature type="transmembrane region" description="Helical" evidence="1">
    <location>
        <begin position="110"/>
        <end position="130"/>
    </location>
</feature>
<feature type="transmembrane region" description="Helical" evidence="1">
    <location>
        <begin position="140"/>
        <end position="160"/>
    </location>
</feature>
<feature type="transmembrane region" description="Helical" evidence="1">
    <location>
        <begin position="197"/>
        <end position="217"/>
    </location>
</feature>
<feature type="transmembrane region" description="Helical" evidence="1">
    <location>
        <begin position="237"/>
        <end position="257"/>
    </location>
</feature>
<gene>
    <name evidence="1" type="primary">cobS</name>
    <name type="ordered locus">BH1592</name>
</gene>
<dbReference type="EC" id="2.7.8.26" evidence="1"/>
<dbReference type="EMBL" id="BA000004">
    <property type="protein sequence ID" value="BAB05311.1"/>
    <property type="molecule type" value="Genomic_DNA"/>
</dbReference>
<dbReference type="PIR" id="H83848">
    <property type="entry name" value="H83848"/>
</dbReference>
<dbReference type="RefSeq" id="WP_010897755.1">
    <property type="nucleotide sequence ID" value="NC_002570.2"/>
</dbReference>
<dbReference type="STRING" id="272558.gene:10727490"/>
<dbReference type="GeneID" id="87597213"/>
<dbReference type="KEGG" id="bha:BH1592"/>
<dbReference type="eggNOG" id="COG0368">
    <property type="taxonomic scope" value="Bacteria"/>
</dbReference>
<dbReference type="HOGENOM" id="CLU_057426_3_1_9"/>
<dbReference type="OrthoDB" id="9794626at2"/>
<dbReference type="UniPathway" id="UPA00148">
    <property type="reaction ID" value="UER00238"/>
</dbReference>
<dbReference type="Proteomes" id="UP000001258">
    <property type="component" value="Chromosome"/>
</dbReference>
<dbReference type="GO" id="GO:0005886">
    <property type="term" value="C:plasma membrane"/>
    <property type="evidence" value="ECO:0007669"/>
    <property type="project" value="UniProtKB-SubCell"/>
</dbReference>
<dbReference type="GO" id="GO:0051073">
    <property type="term" value="F:adenosylcobinamide-GDP ribazoletransferase activity"/>
    <property type="evidence" value="ECO:0007669"/>
    <property type="project" value="UniProtKB-UniRule"/>
</dbReference>
<dbReference type="GO" id="GO:0008818">
    <property type="term" value="F:cobalamin 5'-phosphate synthase activity"/>
    <property type="evidence" value="ECO:0007669"/>
    <property type="project" value="UniProtKB-UniRule"/>
</dbReference>
<dbReference type="GO" id="GO:0009236">
    <property type="term" value="P:cobalamin biosynthetic process"/>
    <property type="evidence" value="ECO:0007669"/>
    <property type="project" value="UniProtKB-UniRule"/>
</dbReference>
<dbReference type="HAMAP" id="MF_00719">
    <property type="entry name" value="CobS"/>
    <property type="match status" value="1"/>
</dbReference>
<dbReference type="InterPro" id="IPR003805">
    <property type="entry name" value="CobS"/>
</dbReference>
<dbReference type="PANTHER" id="PTHR34148">
    <property type="entry name" value="ADENOSYLCOBINAMIDE-GDP RIBAZOLETRANSFERASE"/>
    <property type="match status" value="1"/>
</dbReference>
<dbReference type="PANTHER" id="PTHR34148:SF1">
    <property type="entry name" value="ADENOSYLCOBINAMIDE-GDP RIBAZOLETRANSFERASE"/>
    <property type="match status" value="1"/>
</dbReference>
<dbReference type="Pfam" id="PF02654">
    <property type="entry name" value="CobS"/>
    <property type="match status" value="1"/>
</dbReference>
<sequence>MKHGLNGLLLAFQFLTTVPITRQIPWTARSARWSIVCYPLTGLVLGGLLVSLYLLLSPFLSPLVLAALLVTLSIFYSGGLHLDGWMDVSDAFLSRRDRETKLIILKDSRVGAFAVMTTILLIGWKVLLLMELIALAPREFTWLLLLVPVCLRWMIIVQLIYGKAASDQGMAASLLPYVTTHVKNASRVWFLFIAGACFLLLQNVILTLCFLLMIWLFPLFWLRVCKREIGGMSGDTIGASIEGGELFLWGIMWTFFLSVTA</sequence>
<protein>
    <recommendedName>
        <fullName evidence="1">Adenosylcobinamide-GDP ribazoletransferase</fullName>
        <ecNumber evidence="1">2.7.8.26</ecNumber>
    </recommendedName>
    <alternativeName>
        <fullName evidence="1">Cobalamin synthase</fullName>
    </alternativeName>
    <alternativeName>
        <fullName evidence="1">Cobalamin-5'-phosphate synthase</fullName>
    </alternativeName>
</protein>
<reference key="1">
    <citation type="journal article" date="2000" name="Nucleic Acids Res.">
        <title>Complete genome sequence of the alkaliphilic bacterium Bacillus halodurans and genomic sequence comparison with Bacillus subtilis.</title>
        <authorList>
            <person name="Takami H."/>
            <person name="Nakasone K."/>
            <person name="Takaki Y."/>
            <person name="Maeno G."/>
            <person name="Sasaki R."/>
            <person name="Masui N."/>
            <person name="Fuji F."/>
            <person name="Hirama C."/>
            <person name="Nakamura Y."/>
            <person name="Ogasawara N."/>
            <person name="Kuhara S."/>
            <person name="Horikoshi K."/>
        </authorList>
    </citation>
    <scope>NUCLEOTIDE SEQUENCE [LARGE SCALE GENOMIC DNA]</scope>
    <source>
        <strain>ATCC BAA-125 / DSM 18197 / FERM 7344 / JCM 9153 / C-125</strain>
    </source>
</reference>
<accession>Q9KCH9</accession>
<name>COBS_HALH5</name>